<comment type="pathway">
    <text>Cofactor biosynthesis; adenosylcobalamin biosynthesis.</text>
</comment>
<comment type="caution">
    <text evidence="1">Was originally thought to originate from Pseudomonas denitrificans, but similarity searches show that the sequence is much closer to Sinorhizobium. The entry's taxonomy has been changed.</text>
</comment>
<evidence type="ECO:0000305" key="1"/>
<organism>
    <name type="scientific">Sinorhizobium sp</name>
    <dbReference type="NCBI Taxonomy" id="42445"/>
    <lineage>
        <taxon>Bacteria</taxon>
        <taxon>Pseudomonadati</taxon>
        <taxon>Pseudomonadota</taxon>
        <taxon>Alphaproteobacteria</taxon>
        <taxon>Hyphomicrobiales</taxon>
        <taxon>Rhizobiaceae</taxon>
        <taxon>Sinorhizobium/Ensifer group</taxon>
        <taxon>Sinorhizobium</taxon>
    </lineage>
</organism>
<gene>
    <name type="primary">cobE</name>
</gene>
<protein>
    <recommendedName>
        <fullName>Protein CobE</fullName>
    </recommendedName>
</protein>
<sequence length="154" mass="15488">MPSGQHSAQTTKAGAGLVLGLGCERRTPAEEVIALAERALADAGVAPGDLRLVASLDARAEEPAILAAAQHFAVPAAFYDAATLEAEASRLANPSEIVFAYTGCHGVAEGAALVGAGREAVLIVQKIVSAHATAALAGPATLRAEKRIQAAEAV</sequence>
<keyword id="KW-0169">Cobalamin biosynthesis</keyword>
<keyword id="KW-0627">Porphyrin biosynthesis</keyword>
<accession>P21635</accession>
<feature type="chain" id="PRO_0000089990" description="Protein CobE">
    <location>
        <begin position="1"/>
        <end position="154"/>
    </location>
</feature>
<reference key="1">
    <citation type="journal article" date="1990" name="J. Bacteriol.">
        <title>Nucleotide sequence of a Pseudomonas denitrificans 5.4-kilobase DNA fragment containing five cob genes and identification of structural genes encoding S-adenosyl-L-methionine: uroporphyrinogen III methyltransferase and cobyrinic acid a,c-diamide synthase.</title>
        <authorList>
            <person name="Crouzet J."/>
            <person name="Cauchois L."/>
            <person name="Blanche F."/>
            <person name="Debussche L."/>
            <person name="Thibaut D."/>
            <person name="Rouyez M.-C."/>
            <person name="Rigault S."/>
            <person name="Mayaux J.-F."/>
            <person name="Cameron B."/>
        </authorList>
    </citation>
    <scope>NUCLEOTIDE SEQUENCE [GENOMIC DNA]</scope>
    <source>
        <strain>SC510</strain>
    </source>
</reference>
<proteinExistence type="predicted"/>
<name>COBE_SINSX</name>
<dbReference type="EMBL" id="M59236">
    <property type="protein sequence ID" value="AAA25772.1"/>
    <property type="molecule type" value="Genomic_DNA"/>
</dbReference>
<dbReference type="SMR" id="P21635"/>
<dbReference type="UniPathway" id="UPA00148"/>
<dbReference type="GO" id="GO:0009236">
    <property type="term" value="P:cobalamin biosynthetic process"/>
    <property type="evidence" value="ECO:0007669"/>
    <property type="project" value="UniProtKB-UniPathway"/>
</dbReference>
<dbReference type="GO" id="GO:0006779">
    <property type="term" value="P:porphyrin-containing compound biosynthetic process"/>
    <property type="evidence" value="ECO:0007669"/>
    <property type="project" value="UniProtKB-KW"/>
</dbReference>
<dbReference type="Gene3D" id="3.30.420.180">
    <property type="entry name" value="CobE/GbiG C-terminal domain"/>
    <property type="match status" value="1"/>
</dbReference>
<dbReference type="InterPro" id="IPR052553">
    <property type="entry name" value="CbiG_hydrolase"/>
</dbReference>
<dbReference type="InterPro" id="IPR002750">
    <property type="entry name" value="CobE/GbiG_C"/>
</dbReference>
<dbReference type="InterPro" id="IPR036518">
    <property type="entry name" value="CobE/GbiG_C_sf"/>
</dbReference>
<dbReference type="PANTHER" id="PTHR37477">
    <property type="entry name" value="COBALT-PRECORRIN-5A HYDROLASE"/>
    <property type="match status" value="1"/>
</dbReference>
<dbReference type="PANTHER" id="PTHR37477:SF1">
    <property type="entry name" value="COBALT-PRECORRIN-5A HYDROLASE"/>
    <property type="match status" value="1"/>
</dbReference>
<dbReference type="Pfam" id="PF01890">
    <property type="entry name" value="CbiG_C"/>
    <property type="match status" value="1"/>
</dbReference>
<dbReference type="SUPFAM" id="SSF159664">
    <property type="entry name" value="CobE/GbiG C-terminal domain-like"/>
    <property type="match status" value="1"/>
</dbReference>